<keyword id="KW-1003">Cell membrane</keyword>
<keyword id="KW-0472">Membrane</keyword>
<keyword id="KW-0653">Protein transport</keyword>
<keyword id="KW-1185">Reference proteome</keyword>
<keyword id="KW-0811">Translocation</keyword>
<keyword id="KW-0812">Transmembrane</keyword>
<keyword id="KW-1133">Transmembrane helix</keyword>
<keyword id="KW-0813">Transport</keyword>
<sequence>MGTKKQKTKKKPSDEILETKRKRLSFLVRMEPRKMVLYPLVVFLVAALILAVHFPEKGIDLKGGVVVTVYHVSASPDELASYVKEKTGIDVRAEEFKDPITGLSGIRIYAPAKTAPSKIADEISNAIRLKYKDADVTPRVVDPTFGKIAQKQGIKAVIYAFIGMAIVVFLFFRDPVPSGTIIFSAFSDMVIALATMGILGIELTTATIAALLMLIGYTVDSNILLTTRLLRRKEDTIEDAYLSAVSTGFTMSTTTLGALFILWLVSTSEVIDSITIVLIFGLLADFMNTWIFNAGVLRWYIASPLKFSIKLRRGK</sequence>
<comment type="function">
    <text evidence="1">Involved in protein export.</text>
</comment>
<comment type="subunit">
    <text evidence="1">Part of the protein translocation apparatus. Forms a complex with SecD.</text>
</comment>
<comment type="subcellular location">
    <subcellularLocation>
        <location evidence="1">Cell membrane</location>
        <topology evidence="1">Multi-pass membrane protein</topology>
    </subcellularLocation>
</comment>
<comment type="similarity">
    <text evidence="1">Belongs to the SecD/SecF family. SecF subfamily.</text>
</comment>
<evidence type="ECO:0000255" key="1">
    <source>
        <dbReference type="HAMAP-Rule" id="MF_01464"/>
    </source>
</evidence>
<dbReference type="EMBL" id="CP001398">
    <property type="protein sequence ID" value="ACS32785.1"/>
    <property type="molecule type" value="Genomic_DNA"/>
</dbReference>
<dbReference type="RefSeq" id="WP_015857904.1">
    <property type="nucleotide sequence ID" value="NC_012804.1"/>
</dbReference>
<dbReference type="SMR" id="C5A3H3"/>
<dbReference type="STRING" id="593117.TGAM_0283"/>
<dbReference type="PaxDb" id="593117-TGAM_0283"/>
<dbReference type="GeneID" id="7988939"/>
<dbReference type="KEGG" id="tga:TGAM_0283"/>
<dbReference type="PATRIC" id="fig|593117.10.peg.286"/>
<dbReference type="eggNOG" id="arCOG03054">
    <property type="taxonomic scope" value="Archaea"/>
</dbReference>
<dbReference type="HOGENOM" id="CLU_060478_0_0_2"/>
<dbReference type="OrthoDB" id="85411at2157"/>
<dbReference type="Proteomes" id="UP000001488">
    <property type="component" value="Chromosome"/>
</dbReference>
<dbReference type="GO" id="GO:0005886">
    <property type="term" value="C:plasma membrane"/>
    <property type="evidence" value="ECO:0007669"/>
    <property type="project" value="UniProtKB-SubCell"/>
</dbReference>
<dbReference type="GO" id="GO:0065002">
    <property type="term" value="P:intracellular protein transmembrane transport"/>
    <property type="evidence" value="ECO:0007669"/>
    <property type="project" value="UniProtKB-UniRule"/>
</dbReference>
<dbReference type="GO" id="GO:0006605">
    <property type="term" value="P:protein targeting"/>
    <property type="evidence" value="ECO:0007669"/>
    <property type="project" value="UniProtKB-UniRule"/>
</dbReference>
<dbReference type="Gene3D" id="1.20.1640.10">
    <property type="entry name" value="Multidrug efflux transporter AcrB transmembrane domain"/>
    <property type="match status" value="1"/>
</dbReference>
<dbReference type="HAMAP" id="MF_01464_A">
    <property type="entry name" value="SecF_A"/>
    <property type="match status" value="1"/>
</dbReference>
<dbReference type="InterPro" id="IPR022813">
    <property type="entry name" value="SecD/SecF_arch_bac"/>
</dbReference>
<dbReference type="InterPro" id="IPR048634">
    <property type="entry name" value="SecD_SecF_C"/>
</dbReference>
<dbReference type="InterPro" id="IPR024921">
    <property type="entry name" value="SecF_arc"/>
</dbReference>
<dbReference type="NCBIfam" id="NF006356">
    <property type="entry name" value="PRK08578.1-4"/>
    <property type="match status" value="1"/>
</dbReference>
<dbReference type="PANTHER" id="PTHR30081:SF8">
    <property type="entry name" value="PROTEIN TRANSLOCASE SUBUNIT SECF"/>
    <property type="match status" value="1"/>
</dbReference>
<dbReference type="PANTHER" id="PTHR30081">
    <property type="entry name" value="PROTEIN-EXPORT MEMBRANE PROTEIN SEC"/>
    <property type="match status" value="1"/>
</dbReference>
<dbReference type="Pfam" id="PF02355">
    <property type="entry name" value="SecD_SecF_C"/>
    <property type="match status" value="1"/>
</dbReference>
<dbReference type="SUPFAM" id="SSF82866">
    <property type="entry name" value="Multidrug efflux transporter AcrB transmembrane domain"/>
    <property type="match status" value="1"/>
</dbReference>
<organism>
    <name type="scientific">Thermococcus gammatolerans (strain DSM 15229 / JCM 11827 / EJ3)</name>
    <dbReference type="NCBI Taxonomy" id="593117"/>
    <lineage>
        <taxon>Archaea</taxon>
        <taxon>Methanobacteriati</taxon>
        <taxon>Methanobacteriota</taxon>
        <taxon>Thermococci</taxon>
        <taxon>Thermococcales</taxon>
        <taxon>Thermococcaceae</taxon>
        <taxon>Thermococcus</taxon>
    </lineage>
</organism>
<protein>
    <recommendedName>
        <fullName evidence="1">Protein-export membrane protein SecF</fullName>
    </recommendedName>
</protein>
<accession>C5A3H3</accession>
<name>SECF_THEGJ</name>
<proteinExistence type="inferred from homology"/>
<feature type="chain" id="PRO_0000412712" description="Protein-export membrane protein SecF">
    <location>
        <begin position="1"/>
        <end position="315"/>
    </location>
</feature>
<feature type="transmembrane region" description="Helical" evidence="1">
    <location>
        <begin position="35"/>
        <end position="55"/>
    </location>
</feature>
<feature type="transmembrane region" description="Helical" evidence="1">
    <location>
        <begin position="152"/>
        <end position="172"/>
    </location>
</feature>
<feature type="transmembrane region" description="Helical" evidence="1">
    <location>
        <begin position="181"/>
        <end position="201"/>
    </location>
</feature>
<feature type="transmembrane region" description="Helical" evidence="1">
    <location>
        <begin position="205"/>
        <end position="225"/>
    </location>
</feature>
<feature type="transmembrane region" description="Helical" evidence="1">
    <location>
        <begin position="242"/>
        <end position="264"/>
    </location>
</feature>
<feature type="transmembrane region" description="Helical" evidence="1">
    <location>
        <begin position="282"/>
        <end position="302"/>
    </location>
</feature>
<reference key="1">
    <citation type="journal article" date="2007" name="Genome Biol.">
        <title>Genome analysis and genome-wide proteomics of Thermococcus gammatolerans, the most radioresistant organism known amongst the Archaea.</title>
        <authorList>
            <person name="Zivanovic Y."/>
            <person name="Armengaud J."/>
            <person name="Lagorce A."/>
            <person name="Leplat C."/>
            <person name="Guerin P."/>
            <person name="Dutertre M."/>
            <person name="Anthouard V."/>
            <person name="Forterre P."/>
            <person name="Wincker P."/>
            <person name="Confalonieri F."/>
        </authorList>
    </citation>
    <scope>NUCLEOTIDE SEQUENCE [LARGE SCALE GENOMIC DNA]</scope>
    <source>
        <strain>DSM 15229 / JCM 11827 / EJ3</strain>
    </source>
</reference>
<gene>
    <name evidence="1" type="primary">secF</name>
    <name type="ordered locus">TGAM_0283</name>
</gene>